<feature type="chain" id="PRO_1000200664" description="Exodeoxyribonuclease 7 large subunit">
    <location>
        <begin position="1"/>
        <end position="505"/>
    </location>
</feature>
<feature type="region of interest" description="Disordered" evidence="2">
    <location>
        <begin position="466"/>
        <end position="505"/>
    </location>
</feature>
<feature type="compositionally biased region" description="Pro residues" evidence="2">
    <location>
        <begin position="480"/>
        <end position="497"/>
    </location>
</feature>
<gene>
    <name evidence="1" type="primary">xseA</name>
    <name type="ordered locus">CCNA_02329</name>
</gene>
<keyword id="KW-0963">Cytoplasm</keyword>
<keyword id="KW-0269">Exonuclease</keyword>
<keyword id="KW-0378">Hydrolase</keyword>
<keyword id="KW-0540">Nuclease</keyword>
<keyword id="KW-1185">Reference proteome</keyword>
<name>EX7L_CAUVN</name>
<organism>
    <name type="scientific">Caulobacter vibrioides (strain NA1000 / CB15N)</name>
    <name type="common">Caulobacter crescentus</name>
    <dbReference type="NCBI Taxonomy" id="565050"/>
    <lineage>
        <taxon>Bacteria</taxon>
        <taxon>Pseudomonadati</taxon>
        <taxon>Pseudomonadota</taxon>
        <taxon>Alphaproteobacteria</taxon>
        <taxon>Caulobacterales</taxon>
        <taxon>Caulobacteraceae</taxon>
        <taxon>Caulobacter</taxon>
    </lineage>
</organism>
<dbReference type="EC" id="3.1.11.6" evidence="1"/>
<dbReference type="EMBL" id="CP001340">
    <property type="protein sequence ID" value="ACL95794.1"/>
    <property type="molecule type" value="Genomic_DNA"/>
</dbReference>
<dbReference type="RefSeq" id="WP_010920107.1">
    <property type="nucleotide sequence ID" value="NC_011916.1"/>
</dbReference>
<dbReference type="RefSeq" id="YP_002517702.1">
    <property type="nucleotide sequence ID" value="NC_011916.1"/>
</dbReference>
<dbReference type="SMR" id="B8GYM1"/>
<dbReference type="GeneID" id="7332283"/>
<dbReference type="KEGG" id="ccs:CCNA_02329"/>
<dbReference type="PATRIC" id="fig|565050.3.peg.2281"/>
<dbReference type="HOGENOM" id="CLU_023625_3_1_5"/>
<dbReference type="OrthoDB" id="9802795at2"/>
<dbReference type="PhylomeDB" id="B8GYM1"/>
<dbReference type="Proteomes" id="UP000001364">
    <property type="component" value="Chromosome"/>
</dbReference>
<dbReference type="GO" id="GO:0005737">
    <property type="term" value="C:cytoplasm"/>
    <property type="evidence" value="ECO:0007669"/>
    <property type="project" value="UniProtKB-SubCell"/>
</dbReference>
<dbReference type="GO" id="GO:0009318">
    <property type="term" value="C:exodeoxyribonuclease VII complex"/>
    <property type="evidence" value="ECO:0007669"/>
    <property type="project" value="InterPro"/>
</dbReference>
<dbReference type="GO" id="GO:0008855">
    <property type="term" value="F:exodeoxyribonuclease VII activity"/>
    <property type="evidence" value="ECO:0007669"/>
    <property type="project" value="UniProtKB-UniRule"/>
</dbReference>
<dbReference type="GO" id="GO:0003676">
    <property type="term" value="F:nucleic acid binding"/>
    <property type="evidence" value="ECO:0007669"/>
    <property type="project" value="InterPro"/>
</dbReference>
<dbReference type="GO" id="GO:0006308">
    <property type="term" value="P:DNA catabolic process"/>
    <property type="evidence" value="ECO:0007669"/>
    <property type="project" value="UniProtKB-UniRule"/>
</dbReference>
<dbReference type="CDD" id="cd04489">
    <property type="entry name" value="ExoVII_LU_OBF"/>
    <property type="match status" value="1"/>
</dbReference>
<dbReference type="HAMAP" id="MF_00378">
    <property type="entry name" value="Exonuc_7_L"/>
    <property type="match status" value="1"/>
</dbReference>
<dbReference type="InterPro" id="IPR003753">
    <property type="entry name" value="Exonuc_VII_L"/>
</dbReference>
<dbReference type="InterPro" id="IPR020579">
    <property type="entry name" value="Exonuc_VII_lsu_C"/>
</dbReference>
<dbReference type="InterPro" id="IPR025824">
    <property type="entry name" value="OB-fold_nuc-bd_dom"/>
</dbReference>
<dbReference type="NCBIfam" id="TIGR00237">
    <property type="entry name" value="xseA"/>
    <property type="match status" value="1"/>
</dbReference>
<dbReference type="PANTHER" id="PTHR30008">
    <property type="entry name" value="EXODEOXYRIBONUCLEASE 7 LARGE SUBUNIT"/>
    <property type="match status" value="1"/>
</dbReference>
<dbReference type="PANTHER" id="PTHR30008:SF0">
    <property type="entry name" value="EXODEOXYRIBONUCLEASE 7 LARGE SUBUNIT"/>
    <property type="match status" value="1"/>
</dbReference>
<dbReference type="Pfam" id="PF02601">
    <property type="entry name" value="Exonuc_VII_L"/>
    <property type="match status" value="1"/>
</dbReference>
<dbReference type="Pfam" id="PF13742">
    <property type="entry name" value="tRNA_anti_2"/>
    <property type="match status" value="1"/>
</dbReference>
<comment type="function">
    <text evidence="1">Bidirectionally degrades single-stranded DNA into large acid-insoluble oligonucleotides, which are then degraded further into small acid-soluble oligonucleotides.</text>
</comment>
<comment type="catalytic activity">
    <reaction evidence="1">
        <text>Exonucleolytic cleavage in either 5'- to 3'- or 3'- to 5'-direction to yield nucleoside 5'-phosphates.</text>
        <dbReference type="EC" id="3.1.11.6"/>
    </reaction>
</comment>
<comment type="subunit">
    <text evidence="1">Heterooligomer composed of large and small subunits.</text>
</comment>
<comment type="subcellular location">
    <subcellularLocation>
        <location evidence="1">Cytoplasm</location>
    </subcellularLocation>
</comment>
<comment type="similarity">
    <text evidence="1">Belongs to the XseA family.</text>
</comment>
<accession>B8GYM1</accession>
<reference key="1">
    <citation type="journal article" date="2010" name="J. Bacteriol.">
        <title>The genetic basis of laboratory adaptation in Caulobacter crescentus.</title>
        <authorList>
            <person name="Marks M.E."/>
            <person name="Castro-Rojas C.M."/>
            <person name="Teiling C."/>
            <person name="Du L."/>
            <person name="Kapatral V."/>
            <person name="Walunas T.L."/>
            <person name="Crosson S."/>
        </authorList>
    </citation>
    <scope>NUCLEOTIDE SEQUENCE [LARGE SCALE GENOMIC DNA]</scope>
    <source>
        <strain>NA1000 / CB15N</strain>
    </source>
</reference>
<protein>
    <recommendedName>
        <fullName evidence="1">Exodeoxyribonuclease 7 large subunit</fullName>
        <ecNumber evidence="1">3.1.11.6</ecNumber>
    </recommendedName>
    <alternativeName>
        <fullName evidence="1">Exodeoxyribonuclease VII large subunit</fullName>
        <shortName evidence="1">Exonuclease VII large subunit</shortName>
    </alternativeName>
</protein>
<proteinExistence type="inferred from homology"/>
<sequence>MSDLPPTDSNAPPYSVSELAFALKRTLEDRYGFVRLRGELSKVTHHSNGHVYLTIKDDKSAIDGVVWKGNVRGLGVRPEHGLEVIVTGKITTYPAGSRYQIVIDSMEAAGVGALLAQLERLKAKLAAEGLFAPERKRPLPSMPAVVGVITSPTGAVIRDILHRIRDRWPCQVLVWPCVVQGDAAAGQVSAAIRGFNAIQPGGPVPRPDVLIVARGGGSVEDLWAFNDEGLARTVAEGTIPLISAVGHETDTTLIDFVSDRRAPTPTAAAEMATPVLAELRALISDLDRRLNRCGARTIEERRTRLVSAARGLPRPNDLLALAQQRFDIASGRLDAALDRNTTVHAQSLLKVTARLTPEALGRQRAVKAERLADLSRRLDLAARRAPDRVAQHARLPALWDRLNAAGQRRLQRDADRLENLEKLRQSLNPERPLELGFALVRKGDGTLARSAADLVSGERVNLKFKSGDRDAVIDGEGGPAPAPTAPAPKPRPKPAAPPAGQGDLF</sequence>
<evidence type="ECO:0000255" key="1">
    <source>
        <dbReference type="HAMAP-Rule" id="MF_00378"/>
    </source>
</evidence>
<evidence type="ECO:0000256" key="2">
    <source>
        <dbReference type="SAM" id="MobiDB-lite"/>
    </source>
</evidence>